<reference key="1">
    <citation type="journal article" date="2005" name="Nature">
        <title>The genome of the social amoeba Dictyostelium discoideum.</title>
        <authorList>
            <person name="Eichinger L."/>
            <person name="Pachebat J.A."/>
            <person name="Gloeckner G."/>
            <person name="Rajandream M.A."/>
            <person name="Sucgang R."/>
            <person name="Berriman M."/>
            <person name="Song J."/>
            <person name="Olsen R."/>
            <person name="Szafranski K."/>
            <person name="Xu Q."/>
            <person name="Tunggal B."/>
            <person name="Kummerfeld S."/>
            <person name="Madera M."/>
            <person name="Konfortov B.A."/>
            <person name="Rivero F."/>
            <person name="Bankier A.T."/>
            <person name="Lehmann R."/>
            <person name="Hamlin N."/>
            <person name="Davies R."/>
            <person name="Gaudet P."/>
            <person name="Fey P."/>
            <person name="Pilcher K."/>
            <person name="Chen G."/>
            <person name="Saunders D."/>
            <person name="Sodergren E.J."/>
            <person name="Davis P."/>
            <person name="Kerhornou A."/>
            <person name="Nie X."/>
            <person name="Hall N."/>
            <person name="Anjard C."/>
            <person name="Hemphill L."/>
            <person name="Bason N."/>
            <person name="Farbrother P."/>
            <person name="Desany B."/>
            <person name="Just E."/>
            <person name="Morio T."/>
            <person name="Rost R."/>
            <person name="Churcher C.M."/>
            <person name="Cooper J."/>
            <person name="Haydock S."/>
            <person name="van Driessche N."/>
            <person name="Cronin A."/>
            <person name="Goodhead I."/>
            <person name="Muzny D.M."/>
            <person name="Mourier T."/>
            <person name="Pain A."/>
            <person name="Lu M."/>
            <person name="Harper D."/>
            <person name="Lindsay R."/>
            <person name="Hauser H."/>
            <person name="James K.D."/>
            <person name="Quiles M."/>
            <person name="Madan Babu M."/>
            <person name="Saito T."/>
            <person name="Buchrieser C."/>
            <person name="Wardroper A."/>
            <person name="Felder M."/>
            <person name="Thangavelu M."/>
            <person name="Johnson D."/>
            <person name="Knights A."/>
            <person name="Loulseged H."/>
            <person name="Mungall K.L."/>
            <person name="Oliver K."/>
            <person name="Price C."/>
            <person name="Quail M.A."/>
            <person name="Urushihara H."/>
            <person name="Hernandez J."/>
            <person name="Rabbinowitsch E."/>
            <person name="Steffen D."/>
            <person name="Sanders M."/>
            <person name="Ma J."/>
            <person name="Kohara Y."/>
            <person name="Sharp S."/>
            <person name="Simmonds M.N."/>
            <person name="Spiegler S."/>
            <person name="Tivey A."/>
            <person name="Sugano S."/>
            <person name="White B."/>
            <person name="Walker D."/>
            <person name="Woodward J.R."/>
            <person name="Winckler T."/>
            <person name="Tanaka Y."/>
            <person name="Shaulsky G."/>
            <person name="Schleicher M."/>
            <person name="Weinstock G.M."/>
            <person name="Rosenthal A."/>
            <person name="Cox E.C."/>
            <person name="Chisholm R.L."/>
            <person name="Gibbs R.A."/>
            <person name="Loomis W.F."/>
            <person name="Platzer M."/>
            <person name="Kay R.R."/>
            <person name="Williams J.G."/>
            <person name="Dear P.H."/>
            <person name="Noegel A.A."/>
            <person name="Barrell B.G."/>
            <person name="Kuspa A."/>
        </authorList>
    </citation>
    <scope>NUCLEOTIDE SEQUENCE [LARGE SCALE GENOMIC DNA]</scope>
    <source>
        <strain>AX4</strain>
    </source>
</reference>
<reference key="2">
    <citation type="journal article" date="2006" name="Development">
        <title>bZIP transcription factor interactions regulate DIF responses in Dictyostelium.</title>
        <authorList>
            <person name="Huang E."/>
            <person name="Blagg S.L."/>
            <person name="Keller T."/>
            <person name="Katoh M."/>
            <person name="Shaulsky G."/>
            <person name="Thompson C.R.L."/>
        </authorList>
    </citation>
    <scope>IDENTIFICATION</scope>
</reference>
<gene>
    <name type="primary">bzpE</name>
    <name type="ORF">DDB_G0269338</name>
</gene>
<proteinExistence type="inferred from homology"/>
<sequence length="418" mass="47386">MDDQQLTIQQIQQLHMLLQQQQQQQQQQQQQQQQQQQQLQQQNFQLTPQNFQIPVNNNNNNNNNSNNNNNNETAFNITSQNNSIAANLNNDTNIINTTTTTTNNNNNNNNNNNNNNNNNNNNNNNNNNNNNNNTAPNQKFPTRKYKKQKDKLAELGIDVELSKKPTAAVKKKPPAKKSAKNAASQPTSPTLSTTNTSSAFTTAVLDTKKRKNQELLDYSDNSEESDSDEEDFENGDNENGDFPGGGDRKNRRLLKNREAAQLFRQRQKEYINSLESKASSLEASNTTALSKVSHLTEENQLMKDKVRYLKNFVKQAVSISLPMSVVNQDNINNLNNNLNGLQNQQNNNNNNNNNNNNNNNNNNNNNNNNNNNNNQNNFNNNNNNNINNNITFNNNNNNNSNNNNSNNIDSLLFNLPPD</sequence>
<comment type="function">
    <text evidence="1">Probable transcriptional regulator.</text>
</comment>
<comment type="subcellular location">
    <subcellularLocation>
        <location evidence="3">Nucleus</location>
    </subcellularLocation>
</comment>
<comment type="similarity">
    <text evidence="5">Belongs to the bZIP family.</text>
</comment>
<feature type="chain" id="PRO_0000384405" description="Probable basic-leucine zipper transcription factor E">
    <location>
        <begin position="1"/>
        <end position="418"/>
    </location>
</feature>
<feature type="domain" description="bZIP" evidence="3">
    <location>
        <begin position="246"/>
        <end position="309"/>
    </location>
</feature>
<feature type="region of interest" description="Disordered" evidence="4">
    <location>
        <begin position="51"/>
        <end position="75"/>
    </location>
</feature>
<feature type="region of interest" description="Disordered" evidence="4">
    <location>
        <begin position="95"/>
        <end position="149"/>
    </location>
</feature>
<feature type="region of interest" description="Disordered" evidence="4">
    <location>
        <begin position="165"/>
        <end position="196"/>
    </location>
</feature>
<feature type="region of interest" description="Disordered" evidence="4">
    <location>
        <begin position="211"/>
        <end position="252"/>
    </location>
</feature>
<feature type="region of interest" description="Basic motif" evidence="3">
    <location>
        <begin position="248"/>
        <end position="268"/>
    </location>
</feature>
<feature type="region of interest" description="Leucine-zipper" evidence="3">
    <location>
        <begin position="274"/>
        <end position="281"/>
    </location>
</feature>
<feature type="region of interest" description="Disordered" evidence="4">
    <location>
        <begin position="336"/>
        <end position="418"/>
    </location>
</feature>
<feature type="coiled-coil region" evidence="2">
    <location>
        <begin position="8"/>
        <end position="47"/>
    </location>
</feature>
<feature type="coiled-coil region" evidence="2">
    <location>
        <begin position="324"/>
        <end position="362"/>
    </location>
</feature>
<feature type="compositionally biased region" description="Low complexity" evidence="4">
    <location>
        <begin position="51"/>
        <end position="71"/>
    </location>
</feature>
<feature type="compositionally biased region" description="Low complexity" evidence="4">
    <location>
        <begin position="95"/>
        <end position="134"/>
    </location>
</feature>
<feature type="compositionally biased region" description="Basic residues" evidence="4">
    <location>
        <begin position="169"/>
        <end position="179"/>
    </location>
</feature>
<feature type="compositionally biased region" description="Low complexity" evidence="4">
    <location>
        <begin position="180"/>
        <end position="196"/>
    </location>
</feature>
<feature type="compositionally biased region" description="Acidic residues" evidence="4">
    <location>
        <begin position="220"/>
        <end position="239"/>
    </location>
</feature>
<evidence type="ECO:0000250" key="1"/>
<evidence type="ECO:0000255" key="2"/>
<evidence type="ECO:0000255" key="3">
    <source>
        <dbReference type="PROSITE-ProRule" id="PRU00978"/>
    </source>
</evidence>
<evidence type="ECO:0000256" key="4">
    <source>
        <dbReference type="SAM" id="MobiDB-lite"/>
    </source>
</evidence>
<evidence type="ECO:0000305" key="5"/>
<dbReference type="EMBL" id="AAFI02000005">
    <property type="protein sequence ID" value="EAL72019.1"/>
    <property type="molecule type" value="Genomic_DNA"/>
</dbReference>
<dbReference type="RefSeq" id="XP_645888.1">
    <property type="nucleotide sequence ID" value="XM_640796.1"/>
</dbReference>
<dbReference type="SMR" id="Q55E93"/>
<dbReference type="PaxDb" id="44689-DDB0220089"/>
<dbReference type="EnsemblProtists" id="EAL72019">
    <property type="protein sequence ID" value="EAL72019"/>
    <property type="gene ID" value="DDB_G0269338"/>
</dbReference>
<dbReference type="GeneID" id="8616830"/>
<dbReference type="KEGG" id="ddi:DDB_G0269338"/>
<dbReference type="dictyBase" id="DDB_G0269338">
    <property type="gene designation" value="bzpE"/>
</dbReference>
<dbReference type="VEuPathDB" id="AmoebaDB:DDB_G0269338"/>
<dbReference type="eggNOG" id="ENOG502RC8F">
    <property type="taxonomic scope" value="Eukaryota"/>
</dbReference>
<dbReference type="HOGENOM" id="CLU_657918_0_0_1"/>
<dbReference type="InParanoid" id="Q55E93"/>
<dbReference type="OMA" id="MFFEEIA"/>
<dbReference type="PRO" id="PR:Q55E93"/>
<dbReference type="Proteomes" id="UP000002195">
    <property type="component" value="Chromosome 1"/>
</dbReference>
<dbReference type="GO" id="GO:0005634">
    <property type="term" value="C:nucleus"/>
    <property type="evidence" value="ECO:0007669"/>
    <property type="project" value="UniProtKB-SubCell"/>
</dbReference>
<dbReference type="GO" id="GO:0003677">
    <property type="term" value="F:DNA binding"/>
    <property type="evidence" value="ECO:0007669"/>
    <property type="project" value="UniProtKB-KW"/>
</dbReference>
<dbReference type="GO" id="GO:0003700">
    <property type="term" value="F:DNA-binding transcription factor activity"/>
    <property type="evidence" value="ECO:0007669"/>
    <property type="project" value="InterPro"/>
</dbReference>
<dbReference type="CDD" id="cd14704">
    <property type="entry name" value="bZIP_HY5-like"/>
    <property type="match status" value="1"/>
</dbReference>
<dbReference type="Gene3D" id="1.20.5.170">
    <property type="match status" value="1"/>
</dbReference>
<dbReference type="InterPro" id="IPR004827">
    <property type="entry name" value="bZIP"/>
</dbReference>
<dbReference type="InterPro" id="IPR046347">
    <property type="entry name" value="bZIP_sf"/>
</dbReference>
<dbReference type="PANTHER" id="PTHR47416:SF8">
    <property type="entry name" value="BASIC-LEUCINE ZIPPER TRANSCRIPTION FACTOR E-RELATED"/>
    <property type="match status" value="1"/>
</dbReference>
<dbReference type="PANTHER" id="PTHR47416">
    <property type="entry name" value="BASIC-LEUCINE ZIPPER TRANSCRIPTION FACTOR F-RELATED"/>
    <property type="match status" value="1"/>
</dbReference>
<dbReference type="Pfam" id="PF00170">
    <property type="entry name" value="bZIP_1"/>
    <property type="match status" value="1"/>
</dbReference>
<dbReference type="SMART" id="SM00338">
    <property type="entry name" value="BRLZ"/>
    <property type="match status" value="1"/>
</dbReference>
<dbReference type="SUPFAM" id="SSF57959">
    <property type="entry name" value="Leucine zipper domain"/>
    <property type="match status" value="1"/>
</dbReference>
<dbReference type="PROSITE" id="PS50217">
    <property type="entry name" value="BZIP"/>
    <property type="match status" value="1"/>
</dbReference>
<keyword id="KW-0175">Coiled coil</keyword>
<keyword id="KW-0238">DNA-binding</keyword>
<keyword id="KW-0539">Nucleus</keyword>
<keyword id="KW-1185">Reference proteome</keyword>
<keyword id="KW-0804">Transcription</keyword>
<keyword id="KW-0805">Transcription regulation</keyword>
<organism>
    <name type="scientific">Dictyostelium discoideum</name>
    <name type="common">Social amoeba</name>
    <dbReference type="NCBI Taxonomy" id="44689"/>
    <lineage>
        <taxon>Eukaryota</taxon>
        <taxon>Amoebozoa</taxon>
        <taxon>Evosea</taxon>
        <taxon>Eumycetozoa</taxon>
        <taxon>Dictyostelia</taxon>
        <taxon>Dictyosteliales</taxon>
        <taxon>Dictyosteliaceae</taxon>
        <taxon>Dictyostelium</taxon>
    </lineage>
</organism>
<protein>
    <recommendedName>
        <fullName>Probable basic-leucine zipper transcription factor E</fullName>
    </recommendedName>
</protein>
<accession>Q55E93</accession>
<name>BZPE_DICDI</name>